<feature type="chain" id="PRO_0000220465" description="Cytochrome b6-f complex subunit 6">
    <location>
        <begin position="1"/>
        <end position="31"/>
    </location>
</feature>
<feature type="transmembrane region" description="Helical" evidence="1">
    <location>
        <begin position="4"/>
        <end position="24"/>
    </location>
</feature>
<reference key="1">
    <citation type="journal article" date="2004" name="DNA Res.">
        <title>Complete chloroplast genome sequence from Korea ginseng (Panax schinseng Nees) and comparative analysis of sequence evolution among 17 vascular plants.</title>
        <authorList>
            <person name="Kim K.-J."/>
            <person name="Lee H.-L."/>
        </authorList>
    </citation>
    <scope>NUCLEOTIDE SEQUENCE [LARGE SCALE GENOMIC DNA]</scope>
</reference>
<name>PETL_PANGI</name>
<gene>
    <name evidence="1" type="primary">petL</name>
    <name type="ORF">PSC0678</name>
</gene>
<keyword id="KW-0150">Chloroplast</keyword>
<keyword id="KW-0249">Electron transport</keyword>
<keyword id="KW-0472">Membrane</keyword>
<keyword id="KW-0602">Photosynthesis</keyword>
<keyword id="KW-0934">Plastid</keyword>
<keyword id="KW-0793">Thylakoid</keyword>
<keyword id="KW-0812">Transmembrane</keyword>
<keyword id="KW-1133">Transmembrane helix</keyword>
<keyword id="KW-0813">Transport</keyword>
<accession>Q68RY8</accession>
<dbReference type="EMBL" id="AY582139">
    <property type="protein sequence ID" value="AAT98527.1"/>
    <property type="molecule type" value="Genomic_DNA"/>
</dbReference>
<dbReference type="RefSeq" id="YP_086984.1">
    <property type="nucleotide sequence ID" value="NC_006290.1"/>
</dbReference>
<dbReference type="SMR" id="Q68RY8"/>
<dbReference type="GeneID" id="3021572"/>
<dbReference type="GO" id="GO:0009535">
    <property type="term" value="C:chloroplast thylakoid membrane"/>
    <property type="evidence" value="ECO:0007669"/>
    <property type="project" value="UniProtKB-SubCell"/>
</dbReference>
<dbReference type="GO" id="GO:0009512">
    <property type="term" value="C:cytochrome b6f complex"/>
    <property type="evidence" value="ECO:0007669"/>
    <property type="project" value="InterPro"/>
</dbReference>
<dbReference type="GO" id="GO:0045158">
    <property type="term" value="F:electron transporter, transferring electrons within cytochrome b6/f complex of photosystem II activity"/>
    <property type="evidence" value="ECO:0007669"/>
    <property type="project" value="UniProtKB-UniRule"/>
</dbReference>
<dbReference type="GO" id="GO:0015979">
    <property type="term" value="P:photosynthesis"/>
    <property type="evidence" value="ECO:0007669"/>
    <property type="project" value="UniProtKB-KW"/>
</dbReference>
<dbReference type="HAMAP" id="MF_00433">
    <property type="entry name" value="Cytb6_f_PetL"/>
    <property type="match status" value="1"/>
</dbReference>
<dbReference type="InterPro" id="IPR007802">
    <property type="entry name" value="Cyt_b6/f_cplx_su6"/>
</dbReference>
<dbReference type="PANTHER" id="PTHR37266">
    <property type="entry name" value="CYTOCHROME B6-F COMPLEX SUBUNIT 6"/>
    <property type="match status" value="1"/>
</dbReference>
<dbReference type="PANTHER" id="PTHR37266:SF1">
    <property type="entry name" value="CYTOCHROME B6-F COMPLEX SUBUNIT 6"/>
    <property type="match status" value="1"/>
</dbReference>
<dbReference type="Pfam" id="PF05115">
    <property type="entry name" value="PetL"/>
    <property type="match status" value="1"/>
</dbReference>
<sequence length="31" mass="3401">MPTITSYFGFLLVALTITSALFIGLSKIRLI</sequence>
<organism>
    <name type="scientific">Panax ginseng</name>
    <name type="common">Korean ginseng</name>
    <dbReference type="NCBI Taxonomy" id="4054"/>
    <lineage>
        <taxon>Eukaryota</taxon>
        <taxon>Viridiplantae</taxon>
        <taxon>Streptophyta</taxon>
        <taxon>Embryophyta</taxon>
        <taxon>Tracheophyta</taxon>
        <taxon>Spermatophyta</taxon>
        <taxon>Magnoliopsida</taxon>
        <taxon>eudicotyledons</taxon>
        <taxon>Gunneridae</taxon>
        <taxon>Pentapetalae</taxon>
        <taxon>asterids</taxon>
        <taxon>campanulids</taxon>
        <taxon>Apiales</taxon>
        <taxon>Araliaceae</taxon>
        <taxon>Panax</taxon>
    </lineage>
</organism>
<protein>
    <recommendedName>
        <fullName evidence="1">Cytochrome b6-f complex subunit 6</fullName>
    </recommendedName>
    <alternativeName>
        <fullName evidence="1">Cytochrome b6-f complex subunit PetL</fullName>
    </alternativeName>
    <alternativeName>
        <fullName evidence="1">Cytochrome b6-f complex subunit VI</fullName>
    </alternativeName>
</protein>
<geneLocation type="chloroplast"/>
<comment type="function">
    <text evidence="1">Component of the cytochrome b6-f complex, which mediates electron transfer between photosystem II (PSII) and photosystem I (PSI), cyclic electron flow around PSI, and state transitions. PetL is important for photoautotrophic growth as well as for electron transfer efficiency and stability of the cytochrome b6-f complex.</text>
</comment>
<comment type="subunit">
    <text evidence="1">The 4 large subunits of the cytochrome b6-f complex are cytochrome b6, subunit IV (17 kDa polypeptide, PetD), cytochrome f and the Rieske protein, while the 4 small subunits are PetG, PetL, PetM and PetN. The complex functions as a dimer.</text>
</comment>
<comment type="subcellular location">
    <subcellularLocation>
        <location evidence="1">Plastid</location>
        <location evidence="1">Chloroplast thylakoid membrane</location>
        <topology evidence="1">Single-pass membrane protein</topology>
    </subcellularLocation>
</comment>
<comment type="similarity">
    <text evidence="1">Belongs to the PetL family.</text>
</comment>
<proteinExistence type="inferred from homology"/>
<evidence type="ECO:0000255" key="1">
    <source>
        <dbReference type="HAMAP-Rule" id="MF_00433"/>
    </source>
</evidence>